<sequence length="249" mass="28715">MTHQPQQSPQFFLTAPSPCPYLEGQQERKVFTHLVGDKANEINDLLTQGGFRRSQNIAYRPACEVCRACISVRILAGEFEMTRNMRRVWSQNRDLIGRVHKAQPSTEQYALFRDYLDARHRSGGMSDMTVLDYAMMIEDTHVNTQIIEYRRRGPDSFMSAKGDGELIAVALTDVMADGLSMVYSFFLPHMQERSLGTYMILDHIERARAAGLPHVYLGYWVEGSRKMQYKIRFTPQEHLGPRGWQRFEG</sequence>
<name>BPT_BRUA2</name>
<evidence type="ECO:0000255" key="1">
    <source>
        <dbReference type="HAMAP-Rule" id="MF_00689"/>
    </source>
</evidence>
<organism>
    <name type="scientific">Brucella abortus (strain 2308)</name>
    <dbReference type="NCBI Taxonomy" id="359391"/>
    <lineage>
        <taxon>Bacteria</taxon>
        <taxon>Pseudomonadati</taxon>
        <taxon>Pseudomonadota</taxon>
        <taxon>Alphaproteobacteria</taxon>
        <taxon>Hyphomicrobiales</taxon>
        <taxon>Brucellaceae</taxon>
        <taxon>Brucella/Ochrobactrum group</taxon>
        <taxon>Brucella</taxon>
    </lineage>
</organism>
<gene>
    <name evidence="1" type="primary">bpt</name>
    <name type="ordered locus">BAB1_0778</name>
</gene>
<proteinExistence type="inferred from homology"/>
<comment type="function">
    <text evidence="1">Functions in the N-end rule pathway of protein degradation where it conjugates Leu from its aminoacyl-tRNA to the N-termini of proteins containing an N-terminal aspartate or glutamate.</text>
</comment>
<comment type="catalytic activity">
    <reaction evidence="1">
        <text>N-terminal L-glutamyl-[protein] + L-leucyl-tRNA(Leu) = N-terminal L-leucyl-L-glutamyl-[protein] + tRNA(Leu) + H(+)</text>
        <dbReference type="Rhea" id="RHEA:50412"/>
        <dbReference type="Rhea" id="RHEA-COMP:9613"/>
        <dbReference type="Rhea" id="RHEA-COMP:9622"/>
        <dbReference type="Rhea" id="RHEA-COMP:12664"/>
        <dbReference type="Rhea" id="RHEA-COMP:12668"/>
        <dbReference type="ChEBI" id="CHEBI:15378"/>
        <dbReference type="ChEBI" id="CHEBI:64721"/>
        <dbReference type="ChEBI" id="CHEBI:78442"/>
        <dbReference type="ChEBI" id="CHEBI:78494"/>
        <dbReference type="ChEBI" id="CHEBI:133041"/>
        <dbReference type="EC" id="2.3.2.29"/>
    </reaction>
</comment>
<comment type="catalytic activity">
    <reaction evidence="1">
        <text>N-terminal L-aspartyl-[protein] + L-leucyl-tRNA(Leu) = N-terminal L-leucyl-L-aspartyl-[protein] + tRNA(Leu) + H(+)</text>
        <dbReference type="Rhea" id="RHEA:50420"/>
        <dbReference type="Rhea" id="RHEA-COMP:9613"/>
        <dbReference type="Rhea" id="RHEA-COMP:9622"/>
        <dbReference type="Rhea" id="RHEA-COMP:12669"/>
        <dbReference type="Rhea" id="RHEA-COMP:12674"/>
        <dbReference type="ChEBI" id="CHEBI:15378"/>
        <dbReference type="ChEBI" id="CHEBI:64720"/>
        <dbReference type="ChEBI" id="CHEBI:78442"/>
        <dbReference type="ChEBI" id="CHEBI:78494"/>
        <dbReference type="ChEBI" id="CHEBI:133042"/>
        <dbReference type="EC" id="2.3.2.29"/>
    </reaction>
</comment>
<comment type="subcellular location">
    <subcellularLocation>
        <location evidence="1">Cytoplasm</location>
    </subcellularLocation>
</comment>
<comment type="similarity">
    <text evidence="1">Belongs to the R-transferase family. Bpt subfamily.</text>
</comment>
<reference key="1">
    <citation type="journal article" date="2005" name="Infect. Immun.">
        <title>Whole-genome analyses of speciation events in pathogenic Brucellae.</title>
        <authorList>
            <person name="Chain P.S."/>
            <person name="Comerci D.J."/>
            <person name="Tolmasky M.E."/>
            <person name="Larimer F.W."/>
            <person name="Malfatti S.A."/>
            <person name="Vergez L.M."/>
            <person name="Aguero F."/>
            <person name="Land M.L."/>
            <person name="Ugalde R.A."/>
            <person name="Garcia E."/>
        </authorList>
    </citation>
    <scope>NUCLEOTIDE SEQUENCE [LARGE SCALE GENOMIC DNA]</scope>
    <source>
        <strain>2308</strain>
    </source>
</reference>
<keyword id="KW-0012">Acyltransferase</keyword>
<keyword id="KW-0963">Cytoplasm</keyword>
<keyword id="KW-1185">Reference proteome</keyword>
<keyword id="KW-0808">Transferase</keyword>
<dbReference type="EC" id="2.3.2.29" evidence="1"/>
<dbReference type="EMBL" id="AM040264">
    <property type="protein sequence ID" value="CAJ10734.1"/>
    <property type="molecule type" value="Genomic_DNA"/>
</dbReference>
<dbReference type="RefSeq" id="WP_002963894.1">
    <property type="nucleotide sequence ID" value="NZ_KN046823.1"/>
</dbReference>
<dbReference type="SMR" id="Q2YNA4"/>
<dbReference type="STRING" id="359391.BAB1_0778"/>
<dbReference type="KEGG" id="bmf:BAB1_0778"/>
<dbReference type="PATRIC" id="fig|359391.11.peg.3090"/>
<dbReference type="HOGENOM" id="CLU_077607_1_0_5"/>
<dbReference type="Proteomes" id="UP000002719">
    <property type="component" value="Chromosome I"/>
</dbReference>
<dbReference type="GO" id="GO:0005737">
    <property type="term" value="C:cytoplasm"/>
    <property type="evidence" value="ECO:0007669"/>
    <property type="project" value="UniProtKB-SubCell"/>
</dbReference>
<dbReference type="GO" id="GO:0004057">
    <property type="term" value="F:arginyl-tRNA--protein transferase activity"/>
    <property type="evidence" value="ECO:0007669"/>
    <property type="project" value="InterPro"/>
</dbReference>
<dbReference type="GO" id="GO:0008914">
    <property type="term" value="F:leucyl-tRNA--protein transferase activity"/>
    <property type="evidence" value="ECO:0007669"/>
    <property type="project" value="UniProtKB-UniRule"/>
</dbReference>
<dbReference type="GO" id="GO:0071596">
    <property type="term" value="P:ubiquitin-dependent protein catabolic process via the N-end rule pathway"/>
    <property type="evidence" value="ECO:0007669"/>
    <property type="project" value="InterPro"/>
</dbReference>
<dbReference type="HAMAP" id="MF_00689">
    <property type="entry name" value="Bpt"/>
    <property type="match status" value="1"/>
</dbReference>
<dbReference type="InterPro" id="IPR016181">
    <property type="entry name" value="Acyl_CoA_acyltransferase"/>
</dbReference>
<dbReference type="InterPro" id="IPR017138">
    <property type="entry name" value="Asp_Glu_LeuTrfase"/>
</dbReference>
<dbReference type="InterPro" id="IPR030700">
    <property type="entry name" value="N-end_Aminoacyl_Trfase"/>
</dbReference>
<dbReference type="InterPro" id="IPR007472">
    <property type="entry name" value="N-end_Aminoacyl_Trfase_C"/>
</dbReference>
<dbReference type="InterPro" id="IPR007471">
    <property type="entry name" value="N-end_Aminoacyl_Trfase_N"/>
</dbReference>
<dbReference type="NCBIfam" id="NF002341">
    <property type="entry name" value="PRK01305.1-1"/>
    <property type="match status" value="1"/>
</dbReference>
<dbReference type="NCBIfam" id="NF002343">
    <property type="entry name" value="PRK01305.1-4"/>
    <property type="match status" value="1"/>
</dbReference>
<dbReference type="NCBIfam" id="NF002346">
    <property type="entry name" value="PRK01305.2-3"/>
    <property type="match status" value="1"/>
</dbReference>
<dbReference type="PANTHER" id="PTHR21367">
    <property type="entry name" value="ARGININE-TRNA-PROTEIN TRANSFERASE 1"/>
    <property type="match status" value="1"/>
</dbReference>
<dbReference type="PANTHER" id="PTHR21367:SF1">
    <property type="entry name" value="ARGINYL-TRNA--PROTEIN TRANSFERASE 1"/>
    <property type="match status" value="1"/>
</dbReference>
<dbReference type="Pfam" id="PF04377">
    <property type="entry name" value="ATE_C"/>
    <property type="match status" value="1"/>
</dbReference>
<dbReference type="Pfam" id="PF04376">
    <property type="entry name" value="ATE_N"/>
    <property type="match status" value="1"/>
</dbReference>
<dbReference type="PIRSF" id="PIRSF037208">
    <property type="entry name" value="ATE_pro_prd"/>
    <property type="match status" value="1"/>
</dbReference>
<dbReference type="SUPFAM" id="SSF55729">
    <property type="entry name" value="Acyl-CoA N-acyltransferases (Nat)"/>
    <property type="match status" value="1"/>
</dbReference>
<protein>
    <recommendedName>
        <fullName evidence="1">Aspartate/glutamate leucyltransferase</fullName>
        <ecNumber evidence="1">2.3.2.29</ecNumber>
    </recommendedName>
</protein>
<accession>Q2YNA4</accession>
<feature type="chain" id="PRO_0000263173" description="Aspartate/glutamate leucyltransferase">
    <location>
        <begin position="1"/>
        <end position="249"/>
    </location>
</feature>